<organism evidence="9">
    <name type="scientific">Plasmodium falciparum (isolate 3D7)</name>
    <dbReference type="NCBI Taxonomy" id="36329"/>
    <lineage>
        <taxon>Eukaryota</taxon>
        <taxon>Sar</taxon>
        <taxon>Alveolata</taxon>
        <taxon>Apicomplexa</taxon>
        <taxon>Aconoidasida</taxon>
        <taxon>Haemosporida</taxon>
        <taxon>Plasmodiidae</taxon>
        <taxon>Plasmodium</taxon>
        <taxon>Plasmodium (Laverania)</taxon>
    </lineage>
</organism>
<protein>
    <recommendedName>
        <fullName evidence="7">Ubiquitin carboxyl-terminal hydrolase UCHL3</fullName>
        <ecNumber evidence="2 3 4 5">3.4.19.12</ecNumber>
    </recommendedName>
    <alternativeName>
        <fullName evidence="6">PfUCHL3</fullName>
    </alternativeName>
</protein>
<gene>
    <name evidence="6" type="primary">UCHL3</name>
    <name evidence="8" type="ORF">PF3D7_1460400</name>
</gene>
<sequence length="232" mass="26899">MAKNDIWTPLESNPDSLYLYSCKLGQSKLKFVDIYGFNNDLLDMIPQPVQAVIFLYPVNDNIVSENNTNDKHNLKENFDNVWFIKQYIPNSCGTIALLHLYGNLRNKFELDKDSVLDDFFNKVNEMSAEKRGQELKNNKSIENLHHEFCGQVENRDDILDVDTHFIVFVQIEGKIIELDGRKDHPTVHCFTNGDNFLYDTGKIIQDKFIEKCKDDLRFSALAVIPNDNFDII</sequence>
<feature type="chain" id="PRO_0000451572" description="Ubiquitin carboxyl-terminal hydrolase UCHL3">
    <location>
        <begin position="1"/>
        <end position="232"/>
    </location>
</feature>
<feature type="domain" description="UCH catalytic" evidence="1">
    <location>
        <begin position="6"/>
        <end position="225"/>
    </location>
</feature>
<feature type="region of interest" description="Interaction with ubiquitin" evidence="4">
    <location>
        <begin position="10"/>
        <end position="14"/>
    </location>
</feature>
<feature type="region of interest" description="Crossover loop which restricts access of large ubiquitin adducts to the active site" evidence="3">
    <location>
        <begin position="151"/>
        <end position="159"/>
    </location>
</feature>
<feature type="region of interest" description="Interaction with ubiquitin" evidence="4">
    <location>
        <begin position="163"/>
        <end position="165"/>
    </location>
</feature>
<feature type="active site" description="Nucleophile" evidence="1 4">
    <location>
        <position position="92"/>
    </location>
</feature>
<feature type="active site" description="Proton donor" evidence="1">
    <location>
        <position position="164"/>
    </location>
</feature>
<feature type="site" description="Interaction with ubiquitin" evidence="4">
    <location>
        <position position="33"/>
    </location>
</feature>
<feature type="site" description="Transition state stabilizer" evidence="1">
    <location>
        <position position="86"/>
    </location>
</feature>
<feature type="site" description="Interaction with ubiquitin" evidence="4">
    <location>
        <position position="157"/>
    </location>
</feature>
<feature type="site" description="Important for enzyme activity" evidence="1">
    <location>
        <position position="179"/>
    </location>
</feature>
<feature type="site" description="Interaction with ubiquitin" evidence="4">
    <location>
        <position position="219"/>
    </location>
</feature>
<feature type="mutagenesis site" description="Small increase in deubiquitinating and deneddylating activities. Small reduction in deubiquitinating and deneddylating activities; when associated with E-33." evidence="5">
    <original>N</original>
    <variation>D</variation>
    <location>
        <position position="13"/>
    </location>
</feature>
<feature type="mutagenesis site" description="Small reduction in deubiquitinating and deneddylating activities. Small reduction in deubiquitinating and deneddylating activities; when associated with D-13." evidence="5">
    <original>D</original>
    <variation>E</variation>
    <location>
        <position position="33"/>
    </location>
</feature>
<feature type="mutagenesis site" description="Complete loss of deubiquitinating and deneddylating activities." evidence="2">
    <original>C</original>
    <variation>A</variation>
    <location>
        <position position="92"/>
    </location>
</feature>
<feature type="helix" evidence="12">
    <location>
        <begin position="14"/>
        <end position="24"/>
    </location>
</feature>
<feature type="strand" evidence="12">
    <location>
        <begin position="28"/>
        <end position="33"/>
    </location>
</feature>
<feature type="helix" evidence="12">
    <location>
        <begin position="39"/>
        <end position="42"/>
    </location>
</feature>
<feature type="strand" evidence="12">
    <location>
        <begin position="51"/>
        <end position="57"/>
    </location>
</feature>
<feature type="helix" evidence="12">
    <location>
        <begin position="92"/>
        <end position="103"/>
    </location>
</feature>
<feature type="turn" evidence="12">
    <location>
        <begin position="105"/>
        <end position="107"/>
    </location>
</feature>
<feature type="helix" evidence="12">
    <location>
        <begin position="115"/>
        <end position="122"/>
    </location>
</feature>
<feature type="turn" evidence="12">
    <location>
        <begin position="123"/>
        <end position="125"/>
    </location>
</feature>
<feature type="helix" evidence="12">
    <location>
        <begin position="128"/>
        <end position="137"/>
    </location>
</feature>
<feature type="helix" evidence="12">
    <location>
        <begin position="139"/>
        <end position="145"/>
    </location>
</feature>
<feature type="helix" evidence="12">
    <location>
        <begin position="155"/>
        <end position="159"/>
    </location>
</feature>
<feature type="strand" evidence="12">
    <location>
        <begin position="163"/>
        <end position="178"/>
    </location>
</feature>
<feature type="strand" evidence="12">
    <location>
        <begin position="182"/>
        <end position="184"/>
    </location>
</feature>
<feature type="strand" evidence="12">
    <location>
        <begin position="186"/>
        <end position="190"/>
    </location>
</feature>
<feature type="helix" evidence="12">
    <location>
        <begin position="193"/>
        <end position="195"/>
    </location>
</feature>
<feature type="helix" evidence="12">
    <location>
        <begin position="196"/>
        <end position="207"/>
    </location>
</feature>
<feature type="turn" evidence="12">
    <location>
        <begin position="208"/>
        <end position="211"/>
    </location>
</feature>
<feature type="strand" evidence="13">
    <location>
        <begin position="212"/>
        <end position="214"/>
    </location>
</feature>
<feature type="strand" evidence="12">
    <location>
        <begin position="219"/>
        <end position="225"/>
    </location>
</feature>
<reference evidence="9" key="1">
    <citation type="journal article" date="2002" name="Nature">
        <title>Genome sequence of the human malaria parasite Plasmodium falciparum.</title>
        <authorList>
            <person name="Gardner M.J."/>
            <person name="Hall N."/>
            <person name="Fung E."/>
            <person name="White O."/>
            <person name="Berriman M."/>
            <person name="Hyman R.W."/>
            <person name="Carlton J.M."/>
            <person name="Pain A."/>
            <person name="Nelson K.E."/>
            <person name="Bowman S."/>
            <person name="Paulsen I.T."/>
            <person name="James K.D."/>
            <person name="Eisen J.A."/>
            <person name="Rutherford K.M."/>
            <person name="Salzberg S.L."/>
            <person name="Craig A."/>
            <person name="Kyes S."/>
            <person name="Chan M.-S."/>
            <person name="Nene V."/>
            <person name="Shallom S.J."/>
            <person name="Suh B."/>
            <person name="Peterson J."/>
            <person name="Angiuoli S."/>
            <person name="Pertea M."/>
            <person name="Allen J."/>
            <person name="Selengut J."/>
            <person name="Haft D."/>
            <person name="Mather M.W."/>
            <person name="Vaidya A.B."/>
            <person name="Martin D.M.A."/>
            <person name="Fairlamb A.H."/>
            <person name="Fraunholz M.J."/>
            <person name="Roos D.S."/>
            <person name="Ralph S.A."/>
            <person name="McFadden G.I."/>
            <person name="Cummings L.M."/>
            <person name="Subramanian G.M."/>
            <person name="Mungall C."/>
            <person name="Venter J.C."/>
            <person name="Carucci D.J."/>
            <person name="Hoffman S.L."/>
            <person name="Newbold C."/>
            <person name="Davis R.W."/>
            <person name="Fraser C.M."/>
            <person name="Barrell B.G."/>
        </authorList>
    </citation>
    <scope>NUCLEOTIDE SEQUENCE [LARGE SCALE GENOMIC DNA]</scope>
    <source>
        <strain evidence="9">3D7</strain>
    </source>
</reference>
<reference evidence="7" key="2">
    <citation type="journal article" date="2007" name="Cell. Microbiol.">
        <title>Apicomplexan UCHL3 retains dual specificity for ubiquitin and Nedd8 throughout evolution.</title>
        <authorList>
            <person name="Frickel E.M."/>
            <person name="Quesada V."/>
            <person name="Muething L."/>
            <person name="Gubbels M.J."/>
            <person name="Spooner E."/>
            <person name="Ploegh H."/>
            <person name="Artavanis-Tsakonas K."/>
        </authorList>
    </citation>
    <scope>FUNCTION</scope>
    <scope>CATALYTIC ACTIVITY</scope>
    <scope>MUTAGENESIS OF CYS-92</scope>
</reference>
<reference evidence="7" key="3">
    <citation type="journal article" date="2009" name="J. Biol. Chem.">
        <title>Substrate filtering by the active site crossover loop in UCHL3 revealed by sortagging and gain-of-function mutations.</title>
        <authorList>
            <person name="Popp M.W."/>
            <person name="Artavanis-Tsakonas K."/>
            <person name="Ploegh H.L."/>
        </authorList>
    </citation>
    <scope>CATALYTIC ACTIVITY</scope>
</reference>
<reference evidence="7" key="4">
    <citation type="journal article" date="2019" name="PLoS Pathog.">
        <title>Nedd8 hydrolysis by UCH proteases in Plasmodium parasites.</title>
        <authorList>
            <person name="Karpiyevich M."/>
            <person name="Adjalley S."/>
            <person name="Mol M."/>
            <person name="Ascher D.B."/>
            <person name="Mason B."/>
            <person name="van der Heden van Noort G.J."/>
            <person name="Laman H."/>
            <person name="Ovaa H."/>
            <person name="Lee M.C.S."/>
            <person name="Artavanis-Tsakonas K."/>
        </authorList>
    </citation>
    <scope>FUNCTION</scope>
    <scope>CATALYTIC ACTIVITY</scope>
    <scope>DEVELOPMENTAL STAGE</scope>
    <scope>IDENTIFICATION BY MASS SPECTROMETRY</scope>
    <scope>MUTAGENESIS OF ASN-13 AND ASP-33</scope>
</reference>
<reference evidence="10 11" key="5">
    <citation type="journal article" date="2010" name="J. Biol. Chem.">
        <title>Characterization and structural studies of the Plasmodium falciparum ubiquitin and Nedd8 hydrolase UCHL3.</title>
        <authorList>
            <person name="Artavanis-Tsakonas K."/>
            <person name="Weihofen W.A."/>
            <person name="Antos J.M."/>
            <person name="Coleman B.I."/>
            <person name="Comeaux C.A."/>
            <person name="Duraisingh M.T."/>
            <person name="Gaudet R."/>
            <person name="Ploegh H.L."/>
        </authorList>
    </citation>
    <scope>X-RAY CRYSTALLOGRAPHY (2.30 ANGSTROMS) IN COMPLEX WITH UBIQUITIN ANALOG</scope>
    <scope>FUNCTION</scope>
    <scope>CATALYTIC ACTIVITY</scope>
    <scope>BIOPHYSICOCHEMICAL PROPERTIES</scope>
    <scope>ACTIVE SITE</scope>
</reference>
<accession>Q8IKM8</accession>
<dbReference type="EC" id="3.4.19.12" evidence="2 3 4 5"/>
<dbReference type="EMBL" id="LN999946">
    <property type="protein sequence ID" value="CZU00300.1"/>
    <property type="molecule type" value="Genomic_DNA"/>
</dbReference>
<dbReference type="RefSeq" id="XP_001348750.2">
    <property type="nucleotide sequence ID" value="XM_001348714.2"/>
</dbReference>
<dbReference type="PDB" id="2WDT">
    <property type="method" value="X-ray"/>
    <property type="resolution" value="2.30 A"/>
    <property type="chains" value="A/C=1-232"/>
</dbReference>
<dbReference type="PDB" id="2WE6">
    <property type="method" value="X-ray"/>
    <property type="resolution" value="2.42 A"/>
    <property type="chains" value="A/B=1-232"/>
</dbReference>
<dbReference type="PDBsum" id="2WDT"/>
<dbReference type="PDBsum" id="2WE6"/>
<dbReference type="SMR" id="Q8IKM8"/>
<dbReference type="FunCoup" id="Q8IKM8">
    <property type="interactions" value="59"/>
</dbReference>
<dbReference type="STRING" id="36329.Q8IKM8"/>
<dbReference type="MEROPS" id="C12.010"/>
<dbReference type="PaxDb" id="5833-PF14_0576"/>
<dbReference type="EnsemblProtists" id="CZU00300">
    <property type="protein sequence ID" value="CZU00300"/>
    <property type="gene ID" value="PF3D7_1460400"/>
</dbReference>
<dbReference type="GeneID" id="812158"/>
<dbReference type="KEGG" id="pfa:PF3D7_1460400"/>
<dbReference type="VEuPathDB" id="PlasmoDB:PF3D7_1460400"/>
<dbReference type="HOGENOM" id="CLU_054406_0_2_1"/>
<dbReference type="InParanoid" id="Q8IKM8"/>
<dbReference type="OMA" id="IDLHYVC"/>
<dbReference type="OrthoDB" id="427186at2759"/>
<dbReference type="PhylomeDB" id="Q8IKM8"/>
<dbReference type="Reactome" id="R-PFA-5689603">
    <property type="pathway name" value="UCH proteinases"/>
</dbReference>
<dbReference type="Reactome" id="R-PFA-8866652">
    <property type="pathway name" value="Synthesis of active ubiquitin: roles of E1 and E2 enzymes"/>
</dbReference>
<dbReference type="Reactome" id="R-PFA-8951664">
    <property type="pathway name" value="Neddylation"/>
</dbReference>
<dbReference type="EvolutionaryTrace" id="Q8IKM8"/>
<dbReference type="Proteomes" id="UP000001450">
    <property type="component" value="Chromosome 14"/>
</dbReference>
<dbReference type="GO" id="GO:0005737">
    <property type="term" value="C:cytoplasm"/>
    <property type="evidence" value="ECO:0000318"/>
    <property type="project" value="GO_Central"/>
</dbReference>
<dbReference type="GO" id="GO:0000151">
    <property type="term" value="C:ubiquitin ligase complex"/>
    <property type="evidence" value="ECO:0000314"/>
    <property type="project" value="GeneDB"/>
</dbReference>
<dbReference type="GO" id="GO:0004843">
    <property type="term" value="F:cysteine-type deubiquitinase activity"/>
    <property type="evidence" value="ECO:0000314"/>
    <property type="project" value="UniProtKB"/>
</dbReference>
<dbReference type="GO" id="GO:0019784">
    <property type="term" value="F:deNEDDylase activity"/>
    <property type="evidence" value="ECO:0000314"/>
    <property type="project" value="UniProtKB"/>
</dbReference>
<dbReference type="GO" id="GO:0043130">
    <property type="term" value="F:ubiquitin binding"/>
    <property type="evidence" value="ECO:0000314"/>
    <property type="project" value="GeneDB"/>
</dbReference>
<dbReference type="GO" id="GO:0030163">
    <property type="term" value="P:protein catabolic process"/>
    <property type="evidence" value="ECO:0000318"/>
    <property type="project" value="GO_Central"/>
</dbReference>
<dbReference type="GO" id="GO:0000338">
    <property type="term" value="P:protein deneddylation"/>
    <property type="evidence" value="ECO:0000314"/>
    <property type="project" value="UniProtKB"/>
</dbReference>
<dbReference type="GO" id="GO:0016579">
    <property type="term" value="P:protein deubiquitination"/>
    <property type="evidence" value="ECO:0000314"/>
    <property type="project" value="UniProtKB"/>
</dbReference>
<dbReference type="GO" id="GO:0006511">
    <property type="term" value="P:ubiquitin-dependent protein catabolic process"/>
    <property type="evidence" value="ECO:0000250"/>
    <property type="project" value="GeneDB"/>
</dbReference>
<dbReference type="FunFam" id="3.40.532.10:FF:000006">
    <property type="entry name" value="Ubiquitin carboxyl-terminal hydrolase"/>
    <property type="match status" value="1"/>
</dbReference>
<dbReference type="Gene3D" id="3.40.532.10">
    <property type="entry name" value="Peptidase C12, ubiquitin carboxyl-terminal hydrolase"/>
    <property type="match status" value="1"/>
</dbReference>
<dbReference type="InterPro" id="IPR038765">
    <property type="entry name" value="Papain-like_cys_pep_sf"/>
</dbReference>
<dbReference type="InterPro" id="IPR001578">
    <property type="entry name" value="Peptidase_C12_UCH"/>
</dbReference>
<dbReference type="InterPro" id="IPR036959">
    <property type="entry name" value="Peptidase_C12_UCH_sf"/>
</dbReference>
<dbReference type="PANTHER" id="PTHR10589">
    <property type="entry name" value="UBIQUITIN CARBOXYL-TERMINAL HYDROLASE"/>
    <property type="match status" value="1"/>
</dbReference>
<dbReference type="PANTHER" id="PTHR10589:SF17">
    <property type="entry name" value="UBIQUITIN CARBOXYL-TERMINAL HYDROLASE"/>
    <property type="match status" value="1"/>
</dbReference>
<dbReference type="Pfam" id="PF01088">
    <property type="entry name" value="Peptidase_C12"/>
    <property type="match status" value="1"/>
</dbReference>
<dbReference type="PRINTS" id="PR00707">
    <property type="entry name" value="UBCTHYDRLASE"/>
</dbReference>
<dbReference type="SUPFAM" id="SSF54001">
    <property type="entry name" value="Cysteine proteinases"/>
    <property type="match status" value="1"/>
</dbReference>
<dbReference type="PROSITE" id="PS52048">
    <property type="entry name" value="UCH_DOMAIN"/>
    <property type="match status" value="1"/>
</dbReference>
<proteinExistence type="evidence at protein level"/>
<keyword id="KW-0002">3D-structure</keyword>
<keyword id="KW-0378">Hydrolase</keyword>
<keyword id="KW-0645">Protease</keyword>
<keyword id="KW-1185">Reference proteome</keyword>
<keyword id="KW-0788">Thiol protease</keyword>
<keyword id="KW-0833">Ubl conjugation pathway</keyword>
<name>UCHL3_PLAF7</name>
<comment type="function">
    <text evidence="2 4 5">Thiol protease that recognizes and hydrolyzes a peptide bond at the C-terminal glycine of either ubiquitin or NEDD8 (PubMed:17371404, PubMed:20042598, PubMed:31658303). Essential for parasite blood stage survival (PubMed:20042598).</text>
</comment>
<comment type="catalytic activity">
    <reaction evidence="2 3 4 5">
        <text>Thiol-dependent hydrolysis of ester, thioester, amide, peptide and isopeptide bonds formed by the C-terminal Gly of ubiquitin (a 76-residue protein attached to proteins as an intracellular targeting signal).</text>
        <dbReference type="EC" id="3.4.19.12"/>
    </reaction>
</comment>
<comment type="biophysicochemical properties">
    <kinetics>
        <KM evidence="4">301 nM for ubiquitin-AMC</KM>
        <text evidence="4">kcat is 3.2 sec(-1) with ubiquitin-AMC as substrate.</text>
    </kinetics>
</comment>
<comment type="developmental stage">
    <text evidence="5">Expressed during the parasite blood stage, in schizonts (at protein level).</text>
</comment>
<comment type="similarity">
    <text evidence="7">Belongs to the peptidase C12 family.</text>
</comment>
<evidence type="ECO:0000255" key="1">
    <source>
        <dbReference type="PROSITE-ProRule" id="PRU01393"/>
    </source>
</evidence>
<evidence type="ECO:0000269" key="2">
    <source>
    </source>
</evidence>
<evidence type="ECO:0000269" key="3">
    <source>
    </source>
</evidence>
<evidence type="ECO:0000269" key="4">
    <source>
    </source>
</evidence>
<evidence type="ECO:0000269" key="5">
    <source>
    </source>
</evidence>
<evidence type="ECO:0000303" key="6">
    <source>
    </source>
</evidence>
<evidence type="ECO:0000305" key="7"/>
<evidence type="ECO:0000312" key="8">
    <source>
        <dbReference type="EMBL" id="CZU00300.1"/>
    </source>
</evidence>
<evidence type="ECO:0000312" key="9">
    <source>
        <dbReference type="Proteomes" id="UP000001450"/>
    </source>
</evidence>
<evidence type="ECO:0007744" key="10">
    <source>
        <dbReference type="PDB" id="2WDT"/>
    </source>
</evidence>
<evidence type="ECO:0007744" key="11">
    <source>
        <dbReference type="PDB" id="2WE6"/>
    </source>
</evidence>
<evidence type="ECO:0007829" key="12">
    <source>
        <dbReference type="PDB" id="2WDT"/>
    </source>
</evidence>
<evidence type="ECO:0007829" key="13">
    <source>
        <dbReference type="PDB" id="2WE6"/>
    </source>
</evidence>